<gene>
    <name type="primary">B2M</name>
</gene>
<reference key="1">
    <citation type="journal article" date="1999" name="Am. J. Primatol.">
        <title>Phylogenetic relationships of the Callitrichinae (Platyrrhini, primates) based on beta2-microglobulin DNA sequences.</title>
        <authorList>
            <person name="Canavez F.C."/>
            <person name="Moreira M.A.M."/>
            <person name="Simon F."/>
            <person name="Parham P."/>
            <person name="Seuanez H.N."/>
        </authorList>
    </citation>
    <scope>NUCLEOTIDE SEQUENCE [GENOMIC DNA]</scope>
</reference>
<evidence type="ECO:0000250" key="1"/>
<evidence type="ECO:0000255" key="2">
    <source>
        <dbReference type="PROSITE-ProRule" id="PRU00114"/>
    </source>
</evidence>
<evidence type="ECO:0000305" key="3"/>
<protein>
    <recommendedName>
        <fullName>Beta-2-microglobulin</fullName>
    </recommendedName>
</protein>
<dbReference type="EMBL" id="AF084624">
    <property type="protein sequence ID" value="AAF21790.1"/>
    <property type="molecule type" value="Genomic_DNA"/>
</dbReference>
<dbReference type="EMBL" id="AF084622">
    <property type="protein sequence ID" value="AAF21790.1"/>
    <property type="status" value="JOINED"/>
    <property type="molecule type" value="Genomic_DNA"/>
</dbReference>
<dbReference type="EMBL" id="AF084623">
    <property type="protein sequence ID" value="AAF21790.1"/>
    <property type="status" value="JOINED"/>
    <property type="molecule type" value="Genomic_DNA"/>
</dbReference>
<dbReference type="RefSeq" id="XP_002753457.2">
    <property type="nucleotide sequence ID" value="XM_002753411.6"/>
</dbReference>
<dbReference type="SMR" id="P63061"/>
<dbReference type="FunCoup" id="P63061">
    <property type="interactions" value="577"/>
</dbReference>
<dbReference type="STRING" id="9483.ENSCJAP00000048032"/>
<dbReference type="Ensembl" id="ENSCJAT00000053960.3">
    <property type="protein sequence ID" value="ENSCJAP00000048032.2"/>
    <property type="gene ID" value="ENSCJAG00000002377.5"/>
</dbReference>
<dbReference type="GeneID" id="100404307"/>
<dbReference type="KEGG" id="cjc:100404307"/>
<dbReference type="CTD" id="567"/>
<dbReference type="eggNOG" id="ENOG502S8GM">
    <property type="taxonomic scope" value="Eukaryota"/>
</dbReference>
<dbReference type="GeneTree" id="ENSGT00690000102227"/>
<dbReference type="HOGENOM" id="CLU_163066_0_0_1"/>
<dbReference type="InParanoid" id="P63061"/>
<dbReference type="OMA" id="WCVVLVW"/>
<dbReference type="OrthoDB" id="9949628at2759"/>
<dbReference type="Proteomes" id="UP000008225">
    <property type="component" value="Chromosome 10"/>
</dbReference>
<dbReference type="Bgee" id="ENSCJAG00000002377">
    <property type="expression patterns" value="Expressed in kidney and 6 other cell types or tissues"/>
</dbReference>
<dbReference type="GO" id="GO:0005829">
    <property type="term" value="C:cytosol"/>
    <property type="evidence" value="ECO:0007669"/>
    <property type="project" value="Ensembl"/>
</dbReference>
<dbReference type="GO" id="GO:0009897">
    <property type="term" value="C:external side of plasma membrane"/>
    <property type="evidence" value="ECO:0007669"/>
    <property type="project" value="Ensembl"/>
</dbReference>
<dbReference type="GO" id="GO:0005576">
    <property type="term" value="C:extracellular region"/>
    <property type="evidence" value="ECO:0007669"/>
    <property type="project" value="UniProtKB-SubCell"/>
</dbReference>
<dbReference type="GO" id="GO:0005794">
    <property type="term" value="C:Golgi apparatus"/>
    <property type="evidence" value="ECO:0007669"/>
    <property type="project" value="Ensembl"/>
</dbReference>
<dbReference type="GO" id="GO:1990712">
    <property type="term" value="C:HFE-transferrin receptor complex"/>
    <property type="evidence" value="ECO:0007669"/>
    <property type="project" value="Ensembl"/>
</dbReference>
<dbReference type="GO" id="GO:0042824">
    <property type="term" value="C:MHC class I peptide loading complex"/>
    <property type="evidence" value="ECO:0007669"/>
    <property type="project" value="Ensembl"/>
</dbReference>
<dbReference type="GO" id="GO:0042612">
    <property type="term" value="C:MHC class I protein complex"/>
    <property type="evidence" value="ECO:0007669"/>
    <property type="project" value="UniProtKB-KW"/>
</dbReference>
<dbReference type="GO" id="GO:0042803">
    <property type="term" value="F:protein homodimerization activity"/>
    <property type="evidence" value="ECO:0007669"/>
    <property type="project" value="Ensembl"/>
</dbReference>
<dbReference type="GO" id="GO:0005198">
    <property type="term" value="F:structural molecule activity"/>
    <property type="evidence" value="ECO:0007669"/>
    <property type="project" value="Ensembl"/>
</dbReference>
<dbReference type="GO" id="GO:1990000">
    <property type="term" value="P:amyloid fibril formation"/>
    <property type="evidence" value="ECO:0007669"/>
    <property type="project" value="Ensembl"/>
</dbReference>
<dbReference type="GO" id="GO:0019885">
    <property type="term" value="P:antigen processing and presentation of endogenous peptide antigen via MHC class I"/>
    <property type="evidence" value="ECO:0007669"/>
    <property type="project" value="Ensembl"/>
</dbReference>
<dbReference type="GO" id="GO:0002481">
    <property type="term" value="P:antigen processing and presentation of exogenous protein antigen via MHC class Ib, TAP-dependent"/>
    <property type="evidence" value="ECO:0007669"/>
    <property type="project" value="Ensembl"/>
</dbReference>
<dbReference type="GO" id="GO:0071283">
    <property type="term" value="P:cellular response to iron(III) ion"/>
    <property type="evidence" value="ECO:0007669"/>
    <property type="project" value="Ensembl"/>
</dbReference>
<dbReference type="GO" id="GO:0071316">
    <property type="term" value="P:cellular response to nicotine"/>
    <property type="evidence" value="ECO:0007669"/>
    <property type="project" value="Ensembl"/>
</dbReference>
<dbReference type="GO" id="GO:0006879">
    <property type="term" value="P:intracellular iron ion homeostasis"/>
    <property type="evidence" value="ECO:0007669"/>
    <property type="project" value="Ensembl"/>
</dbReference>
<dbReference type="GO" id="GO:0006826">
    <property type="term" value="P:iron ion transport"/>
    <property type="evidence" value="ECO:0007669"/>
    <property type="project" value="Ensembl"/>
</dbReference>
<dbReference type="GO" id="GO:0007611">
    <property type="term" value="P:learning or memory"/>
    <property type="evidence" value="ECO:0007669"/>
    <property type="project" value="Ensembl"/>
</dbReference>
<dbReference type="GO" id="GO:0060586">
    <property type="term" value="P:multicellular organismal-level iron ion homeostasis"/>
    <property type="evidence" value="ECO:0007669"/>
    <property type="project" value="Ensembl"/>
</dbReference>
<dbReference type="GO" id="GO:0050680">
    <property type="term" value="P:negative regulation of epithelial cell proliferation"/>
    <property type="evidence" value="ECO:0007669"/>
    <property type="project" value="Ensembl"/>
</dbReference>
<dbReference type="GO" id="GO:2000978">
    <property type="term" value="P:negative regulation of forebrain neuron differentiation"/>
    <property type="evidence" value="ECO:0007669"/>
    <property type="project" value="Ensembl"/>
</dbReference>
<dbReference type="GO" id="GO:0050768">
    <property type="term" value="P:negative regulation of neurogenesis"/>
    <property type="evidence" value="ECO:0007669"/>
    <property type="project" value="Ensembl"/>
</dbReference>
<dbReference type="GO" id="GO:0010977">
    <property type="term" value="P:negative regulation of neuron projection development"/>
    <property type="evidence" value="ECO:0007669"/>
    <property type="project" value="Ensembl"/>
</dbReference>
<dbReference type="GO" id="GO:0002502">
    <property type="term" value="P:peptide antigen assembly with MHC class I protein complex"/>
    <property type="evidence" value="ECO:0007669"/>
    <property type="project" value="Ensembl"/>
</dbReference>
<dbReference type="GO" id="GO:2000774">
    <property type="term" value="P:positive regulation of cellular senescence"/>
    <property type="evidence" value="ECO:0007669"/>
    <property type="project" value="Ensembl"/>
</dbReference>
<dbReference type="GO" id="GO:0048260">
    <property type="term" value="P:positive regulation of receptor-mediated endocytosis"/>
    <property type="evidence" value="ECO:0007669"/>
    <property type="project" value="Ensembl"/>
</dbReference>
<dbReference type="GO" id="GO:0002726">
    <property type="term" value="P:positive regulation of T cell cytokine production"/>
    <property type="evidence" value="ECO:0007669"/>
    <property type="project" value="Ensembl"/>
</dbReference>
<dbReference type="GO" id="GO:0001916">
    <property type="term" value="P:positive regulation of T cell mediated cytotoxicity"/>
    <property type="evidence" value="ECO:0007669"/>
    <property type="project" value="Ensembl"/>
</dbReference>
<dbReference type="GO" id="GO:0051289">
    <property type="term" value="P:protein homotetramerization"/>
    <property type="evidence" value="ECO:0007669"/>
    <property type="project" value="Ensembl"/>
</dbReference>
<dbReference type="GO" id="GO:0042026">
    <property type="term" value="P:protein refolding"/>
    <property type="evidence" value="ECO:0007669"/>
    <property type="project" value="Ensembl"/>
</dbReference>
<dbReference type="GO" id="GO:0045646">
    <property type="term" value="P:regulation of erythrocyte differentiation"/>
    <property type="evidence" value="ECO:0007669"/>
    <property type="project" value="Ensembl"/>
</dbReference>
<dbReference type="GO" id="GO:0034756">
    <property type="term" value="P:regulation of iron ion transport"/>
    <property type="evidence" value="ECO:0007669"/>
    <property type="project" value="Ensembl"/>
</dbReference>
<dbReference type="GO" id="GO:0002237">
    <property type="term" value="P:response to molecule of bacterial origin"/>
    <property type="evidence" value="ECO:0007669"/>
    <property type="project" value="Ensembl"/>
</dbReference>
<dbReference type="GO" id="GO:0007608">
    <property type="term" value="P:sensory perception of smell"/>
    <property type="evidence" value="ECO:0007669"/>
    <property type="project" value="Ensembl"/>
</dbReference>
<dbReference type="GO" id="GO:0033077">
    <property type="term" value="P:T cell differentiation in thymus"/>
    <property type="evidence" value="ECO:0007669"/>
    <property type="project" value="Ensembl"/>
</dbReference>
<dbReference type="GO" id="GO:0001913">
    <property type="term" value="P:T cell mediated cytotoxicity"/>
    <property type="evidence" value="ECO:0007669"/>
    <property type="project" value="Ensembl"/>
</dbReference>
<dbReference type="CDD" id="cd05770">
    <property type="entry name" value="IgC1_beta2m"/>
    <property type="match status" value="1"/>
</dbReference>
<dbReference type="FunFam" id="2.60.40.10:FF:001005">
    <property type="entry name" value="Beta-2-microglobulin"/>
    <property type="match status" value="1"/>
</dbReference>
<dbReference type="Gene3D" id="2.60.40.10">
    <property type="entry name" value="Immunoglobulins"/>
    <property type="match status" value="1"/>
</dbReference>
<dbReference type="InterPro" id="IPR015707">
    <property type="entry name" value="B2Microglobulin"/>
</dbReference>
<dbReference type="InterPro" id="IPR007110">
    <property type="entry name" value="Ig-like_dom"/>
</dbReference>
<dbReference type="InterPro" id="IPR036179">
    <property type="entry name" value="Ig-like_dom_sf"/>
</dbReference>
<dbReference type="InterPro" id="IPR013783">
    <property type="entry name" value="Ig-like_fold"/>
</dbReference>
<dbReference type="InterPro" id="IPR003006">
    <property type="entry name" value="Ig/MHC_CS"/>
</dbReference>
<dbReference type="InterPro" id="IPR003597">
    <property type="entry name" value="Ig_C1-set"/>
</dbReference>
<dbReference type="InterPro" id="IPR050160">
    <property type="entry name" value="MHC/Immunoglobulin"/>
</dbReference>
<dbReference type="PANTHER" id="PTHR19944:SF62">
    <property type="entry name" value="BETA-2-MICROGLOBULIN"/>
    <property type="match status" value="1"/>
</dbReference>
<dbReference type="PANTHER" id="PTHR19944">
    <property type="entry name" value="MHC CLASS II-RELATED"/>
    <property type="match status" value="1"/>
</dbReference>
<dbReference type="Pfam" id="PF07654">
    <property type="entry name" value="C1-set"/>
    <property type="match status" value="1"/>
</dbReference>
<dbReference type="SMART" id="SM00407">
    <property type="entry name" value="IGc1"/>
    <property type="match status" value="1"/>
</dbReference>
<dbReference type="SUPFAM" id="SSF48726">
    <property type="entry name" value="Immunoglobulin"/>
    <property type="match status" value="1"/>
</dbReference>
<dbReference type="PROSITE" id="PS50835">
    <property type="entry name" value="IG_LIKE"/>
    <property type="match status" value="1"/>
</dbReference>
<dbReference type="PROSITE" id="PS00290">
    <property type="entry name" value="IG_MHC"/>
    <property type="match status" value="1"/>
</dbReference>
<proteinExistence type="inferred from homology"/>
<feature type="signal peptide" evidence="1">
    <location>
        <begin position="1"/>
        <end position="20"/>
    </location>
</feature>
<feature type="chain" id="PRO_0000018764" description="Beta-2-microglobulin">
    <location>
        <begin position="21"/>
        <end position="119"/>
    </location>
</feature>
<feature type="domain" description="Ig-like C1-type">
    <location>
        <begin position="25"/>
        <end position="114"/>
    </location>
</feature>
<feature type="disulfide bond" evidence="2">
    <location>
        <begin position="45"/>
        <end position="100"/>
    </location>
</feature>
<organism>
    <name type="scientific">Callithrix jacchus</name>
    <name type="common">White-tufted-ear marmoset</name>
    <dbReference type="NCBI Taxonomy" id="9483"/>
    <lineage>
        <taxon>Eukaryota</taxon>
        <taxon>Metazoa</taxon>
        <taxon>Chordata</taxon>
        <taxon>Craniata</taxon>
        <taxon>Vertebrata</taxon>
        <taxon>Euteleostomi</taxon>
        <taxon>Mammalia</taxon>
        <taxon>Eutheria</taxon>
        <taxon>Euarchontoglires</taxon>
        <taxon>Primates</taxon>
        <taxon>Haplorrhini</taxon>
        <taxon>Platyrrhini</taxon>
        <taxon>Cebidae</taxon>
        <taxon>Callitrichinae</taxon>
        <taxon>Callithrix</taxon>
        <taxon>Callithrix</taxon>
    </lineage>
</organism>
<accession>P63061</accession>
<accession>O77522</accession>
<keyword id="KW-1015">Disulfide bond</keyword>
<keyword id="KW-0391">Immunity</keyword>
<keyword id="KW-0393">Immunoglobulin domain</keyword>
<keyword id="KW-0490">MHC I</keyword>
<keyword id="KW-1185">Reference proteome</keyword>
<keyword id="KW-0964">Secreted</keyword>
<keyword id="KW-0732">Signal</keyword>
<name>B2MG_CALJA</name>
<comment type="function">
    <text evidence="1">Component of the class I major histocompatibility complex (MHC). Involved in the presentation of peptide antigens to the immune system (By similarity).</text>
</comment>
<comment type="subunit">
    <text evidence="1">Heterodimer of an alpha chain and a beta chain. Beta-2-microglobulin is the beta-chain of major histocompatibility complex class I molecules (By similarity).</text>
</comment>
<comment type="subcellular location">
    <subcellularLocation>
        <location evidence="1">Secreted</location>
    </subcellularLocation>
</comment>
<comment type="similarity">
    <text evidence="3">Belongs to the beta-2-microglobulin family.</text>
</comment>
<sequence>MASSVVVALLVLLSLSGLEAIQHAPKIQVYSRHPAENGKPNFLNCYVSGFHPSDIEVDLLKNGKKIEKVEHSDLSFSKDWSFYLLYYTEFTPSEKDEYACRVSHVTFSTPKTVKWDRNI</sequence>